<accession>Q14568</accession>
<proteinExistence type="evidence at protein level"/>
<comment type="function">
    <text evidence="1">Putative molecular chaperone that may promote the maturation, structural maintenance and proper regulation of specific target proteins.</text>
</comment>
<comment type="subunit">
    <text evidence="1">Homodimer.</text>
</comment>
<comment type="subcellular location">
    <subcellularLocation>
        <location evidence="1">Cytoplasm</location>
    </subcellularLocation>
</comment>
<comment type="similarity">
    <text evidence="6">Belongs to the heat shock protein 90 family.</text>
</comment>
<comment type="caution">
    <text evidence="6">Despite classification as a pseudogene, the existence of this protein is supported by unambiguous mass spectrometry evidence.</text>
</comment>
<gene>
    <name evidence="7" type="primary">HSP90AA2P</name>
    <name evidence="7" type="synonym">HSP90AA2</name>
    <name evidence="5" type="synonym">HSPC2</name>
    <name evidence="7" type="synonym">HSPCAL3</name>
</gene>
<sequence>MPEETQTQDQPMEEEEVETFAFQAEIAQLMSLIINTFYSNKEIFLRELISNSSDALDKIWYESLTDPSKLDSGKELHINLIPNKQDQTLTIVDTGIGMTKADLINNLGTIAKSGTKAFMEALQAGADISMIGQFGVSFYSAYLVAEKVTVITKHNDDEQYAWESSAGGSFTVRTDTGERMGRGTKVILHLKEDQTEYLEEQRIKEIVKKHSQLIGYPITLFVEKECDKEVSDDETEEKEDKEEEKEKEEKESKDKPEIEDVGSDEEEEKKDGDKKKKKTKEKYIDQEELNKTKPIWTRNPDDITNEEYGEFCKNLTNDWEDHLAVKHFSVEGQLEFRALLFVP</sequence>
<protein>
    <recommendedName>
        <fullName evidence="6">Heat shock protein HSP 90-alpha A2</fullName>
    </recommendedName>
    <alternativeName>
        <fullName evidence="6">Heat shock 90 kDa protein 1 alpha-like 3</fullName>
    </alternativeName>
    <alternativeName>
        <fullName evidence="6">Heat shock protein HSP 90-alpha A2 pseudogene</fullName>
    </alternativeName>
    <alternativeName>
        <fullName evidence="5">Heat shock protein family C member 2</fullName>
    </alternativeName>
</protein>
<organism>
    <name type="scientific">Homo sapiens</name>
    <name type="common">Human</name>
    <dbReference type="NCBI Taxonomy" id="9606"/>
    <lineage>
        <taxon>Eukaryota</taxon>
        <taxon>Metazoa</taxon>
        <taxon>Chordata</taxon>
        <taxon>Craniata</taxon>
        <taxon>Vertebrata</taxon>
        <taxon>Euteleostomi</taxon>
        <taxon>Mammalia</taxon>
        <taxon>Eutheria</taxon>
        <taxon>Euarchontoglires</taxon>
        <taxon>Primates</taxon>
        <taxon>Haplorrhini</taxon>
        <taxon>Catarrhini</taxon>
        <taxon>Hominidae</taxon>
        <taxon>Homo</taxon>
    </lineage>
</organism>
<keyword id="KW-0067">ATP-binding</keyword>
<keyword id="KW-0143">Chaperone</keyword>
<keyword id="KW-0963">Cytoplasm</keyword>
<keyword id="KW-0379">Hydroxylation</keyword>
<keyword id="KW-0547">Nucleotide-binding</keyword>
<keyword id="KW-0597">Phosphoprotein</keyword>
<keyword id="KW-1267">Proteomics identification</keyword>
<keyword id="KW-1185">Reference proteome</keyword>
<keyword id="KW-0346">Stress response</keyword>
<dbReference type="EMBL" id="AC103796">
    <property type="status" value="NOT_ANNOTATED_CDS"/>
    <property type="molecule type" value="Genomic_DNA"/>
</dbReference>
<dbReference type="EMBL" id="M30627">
    <property type="protein sequence ID" value="AAA36024.1"/>
    <property type="molecule type" value="mRNA"/>
</dbReference>
<dbReference type="PIR" id="JQ0129">
    <property type="entry name" value="JQ0129"/>
</dbReference>
<dbReference type="SMR" id="Q14568"/>
<dbReference type="FunCoup" id="Q14568">
    <property type="interactions" value="2"/>
</dbReference>
<dbReference type="IntAct" id="Q14568">
    <property type="interactions" value="21"/>
</dbReference>
<dbReference type="MINT" id="Q14568"/>
<dbReference type="GlyGen" id="Q14568">
    <property type="glycosylation" value="2 sites, 1 N-linked glycan (1 site), 1 O-linked glycan (1 site)"/>
</dbReference>
<dbReference type="iPTMnet" id="Q14568"/>
<dbReference type="PhosphoSitePlus" id="Q14568"/>
<dbReference type="SwissPalm" id="Q14568"/>
<dbReference type="BioMuta" id="HGNC:5256"/>
<dbReference type="DMDM" id="172046850"/>
<dbReference type="jPOST" id="Q14568"/>
<dbReference type="MassIVE" id="Q14568"/>
<dbReference type="ProteomicsDB" id="60048"/>
<dbReference type="TopDownProteomics" id="Q14568"/>
<dbReference type="AGR" id="HGNC:5256"/>
<dbReference type="GeneCards" id="HSP90AA2P"/>
<dbReference type="HGNC" id="HGNC:5256">
    <property type="gene designation" value="HSP90AA2P"/>
</dbReference>
<dbReference type="MIM" id="140575">
    <property type="type" value="gene"/>
</dbReference>
<dbReference type="neXtProt" id="NX_Q14568"/>
<dbReference type="InParanoid" id="Q14568"/>
<dbReference type="PAN-GO" id="Q14568">
    <property type="GO annotations" value="0 GO annotations based on evolutionary models"/>
</dbReference>
<dbReference type="PathwayCommons" id="Q14568"/>
<dbReference type="SignaLink" id="Q14568"/>
<dbReference type="ChiTaRS" id="HSP90AA2P">
    <property type="organism name" value="human"/>
</dbReference>
<dbReference type="Pharos" id="Q14568">
    <property type="development level" value="Tdark"/>
</dbReference>
<dbReference type="PRO" id="PR:Q14568"/>
<dbReference type="Proteomes" id="UP000005640">
    <property type="component" value="Unplaced"/>
</dbReference>
<dbReference type="RNAct" id="Q14568">
    <property type="molecule type" value="protein"/>
</dbReference>
<dbReference type="GO" id="GO:0005829">
    <property type="term" value="C:cytosol"/>
    <property type="evidence" value="ECO:0000318"/>
    <property type="project" value="GO_Central"/>
</dbReference>
<dbReference type="GO" id="GO:0070062">
    <property type="term" value="C:extracellular exosome"/>
    <property type="evidence" value="ECO:0007005"/>
    <property type="project" value="UniProtKB"/>
</dbReference>
<dbReference type="GO" id="GO:0048471">
    <property type="term" value="C:perinuclear region of cytoplasm"/>
    <property type="evidence" value="ECO:0000318"/>
    <property type="project" value="GO_Central"/>
</dbReference>
<dbReference type="GO" id="GO:0005886">
    <property type="term" value="C:plasma membrane"/>
    <property type="evidence" value="ECO:0000318"/>
    <property type="project" value="GO_Central"/>
</dbReference>
<dbReference type="GO" id="GO:0032991">
    <property type="term" value="C:protein-containing complex"/>
    <property type="evidence" value="ECO:0000318"/>
    <property type="project" value="GO_Central"/>
</dbReference>
<dbReference type="GO" id="GO:0005524">
    <property type="term" value="F:ATP binding"/>
    <property type="evidence" value="ECO:0000318"/>
    <property type="project" value="GO_Central"/>
</dbReference>
<dbReference type="GO" id="GO:0016887">
    <property type="term" value="F:ATP hydrolysis activity"/>
    <property type="evidence" value="ECO:0000318"/>
    <property type="project" value="GO_Central"/>
</dbReference>
<dbReference type="GO" id="GO:0140662">
    <property type="term" value="F:ATP-dependent protein folding chaperone"/>
    <property type="evidence" value="ECO:0007669"/>
    <property type="project" value="InterPro"/>
</dbReference>
<dbReference type="GO" id="GO:0051082">
    <property type="term" value="F:unfolded protein binding"/>
    <property type="evidence" value="ECO:0000318"/>
    <property type="project" value="GO_Central"/>
</dbReference>
<dbReference type="GO" id="GO:0034605">
    <property type="term" value="P:cellular response to heat"/>
    <property type="evidence" value="ECO:0000318"/>
    <property type="project" value="GO_Central"/>
</dbReference>
<dbReference type="GO" id="GO:0006457">
    <property type="term" value="P:protein folding"/>
    <property type="evidence" value="ECO:0000318"/>
    <property type="project" value="GO_Central"/>
</dbReference>
<dbReference type="GO" id="GO:0050821">
    <property type="term" value="P:protein stabilization"/>
    <property type="evidence" value="ECO:0000318"/>
    <property type="project" value="GO_Central"/>
</dbReference>
<dbReference type="CDD" id="cd16927">
    <property type="entry name" value="HATPase_Hsp90-like"/>
    <property type="match status" value="1"/>
</dbReference>
<dbReference type="FunFam" id="3.30.565.10:FF:000204">
    <property type="entry name" value="Heat shock protein HSP 90-beta"/>
    <property type="match status" value="1"/>
</dbReference>
<dbReference type="Gene3D" id="3.30.230.80">
    <property type="match status" value="1"/>
</dbReference>
<dbReference type="Gene3D" id="3.30.565.10">
    <property type="entry name" value="Histidine kinase-like ATPase, C-terminal domain"/>
    <property type="match status" value="1"/>
</dbReference>
<dbReference type="InterPro" id="IPR036890">
    <property type="entry name" value="HATPase_C_sf"/>
</dbReference>
<dbReference type="InterPro" id="IPR019805">
    <property type="entry name" value="Heat_shock_protein_90_CS"/>
</dbReference>
<dbReference type="InterPro" id="IPR001404">
    <property type="entry name" value="Hsp90_fam"/>
</dbReference>
<dbReference type="InterPro" id="IPR020575">
    <property type="entry name" value="Hsp90_N"/>
</dbReference>
<dbReference type="InterPro" id="IPR020568">
    <property type="entry name" value="Ribosomal_Su5_D2-typ_SF"/>
</dbReference>
<dbReference type="PANTHER" id="PTHR11528">
    <property type="entry name" value="HEAT SHOCK PROTEIN 90 FAMILY MEMBER"/>
    <property type="match status" value="1"/>
</dbReference>
<dbReference type="Pfam" id="PF13589">
    <property type="entry name" value="HATPase_c_3"/>
    <property type="match status" value="1"/>
</dbReference>
<dbReference type="Pfam" id="PF00183">
    <property type="entry name" value="HSP90"/>
    <property type="match status" value="1"/>
</dbReference>
<dbReference type="PRINTS" id="PR00775">
    <property type="entry name" value="HEATSHOCK90"/>
</dbReference>
<dbReference type="SMART" id="SM00387">
    <property type="entry name" value="HATPase_c"/>
    <property type="match status" value="1"/>
</dbReference>
<dbReference type="SUPFAM" id="SSF55874">
    <property type="entry name" value="ATPase domain of HSP90 chaperone/DNA topoisomerase II/histidine kinase"/>
    <property type="match status" value="1"/>
</dbReference>
<dbReference type="SUPFAM" id="SSF54211">
    <property type="entry name" value="Ribosomal protein S5 domain 2-like"/>
    <property type="match status" value="1"/>
</dbReference>
<dbReference type="PROSITE" id="PS00298">
    <property type="entry name" value="HSP90"/>
    <property type="match status" value="1"/>
</dbReference>
<reference key="1">
    <citation type="journal article" date="2006" name="Nature">
        <title>Human chromosome 11 DNA sequence and analysis including novel gene identification.</title>
        <authorList>
            <person name="Taylor T.D."/>
            <person name="Noguchi H."/>
            <person name="Totoki Y."/>
            <person name="Toyoda A."/>
            <person name="Kuroki Y."/>
            <person name="Dewar K."/>
            <person name="Lloyd C."/>
            <person name="Itoh T."/>
            <person name="Takeda T."/>
            <person name="Kim D.-W."/>
            <person name="She X."/>
            <person name="Barlow K.F."/>
            <person name="Bloom T."/>
            <person name="Bruford E."/>
            <person name="Chang J.L."/>
            <person name="Cuomo C.A."/>
            <person name="Eichler E."/>
            <person name="FitzGerald M.G."/>
            <person name="Jaffe D.B."/>
            <person name="LaButti K."/>
            <person name="Nicol R."/>
            <person name="Park H.-S."/>
            <person name="Seaman C."/>
            <person name="Sougnez C."/>
            <person name="Yang X."/>
            <person name="Zimmer A.R."/>
            <person name="Zody M.C."/>
            <person name="Birren B.W."/>
            <person name="Nusbaum C."/>
            <person name="Fujiyama A."/>
            <person name="Hattori M."/>
            <person name="Rogers J."/>
            <person name="Lander E.S."/>
            <person name="Sakaki Y."/>
        </authorList>
    </citation>
    <scope>NUCLEOTIDE SEQUENCE [LARGE SCALE GENOMIC DNA]</scope>
</reference>
<reference key="2">
    <citation type="journal article" date="1989" name="Gene">
        <title>Cloning and analysis of a human 86-kDa heat-shock-protein-encoding gene.</title>
        <authorList>
            <person name="Walter T."/>
            <person name="Drabent B."/>
            <person name="Krebs H."/>
            <person name="Tomalak M."/>
            <person name="Heiss S."/>
            <person name="Benecke B.J.J."/>
        </authorList>
    </citation>
    <scope>NUCLEOTIDE SEQUENCE [GENOMIC DNA] OF 1-311</scope>
    <scope>VARIANT ALA-235</scope>
</reference>
<reference key="3">
    <citation type="journal article" date="1992" name="Genomics">
        <title>Mapping of the gene family for human heat-shock protein 90 alpha to chromosomes 1, 4, 11, and 14.</title>
        <authorList>
            <person name="Ozawa K."/>
            <person name="Murakami Y."/>
            <person name="Eki T."/>
            <person name="Soeda E."/>
            <person name="Yokoyama K."/>
        </authorList>
    </citation>
    <scope>NOMENCLATURE</scope>
</reference>
<reference key="4">
    <citation type="journal article" date="2005" name="Genomics">
        <title>The HSP90 family of genes in the human genome: insights into their divergence and evolution.</title>
        <authorList>
            <person name="Chen B."/>
            <person name="Piel W.H."/>
            <person name="Gui L."/>
            <person name="Bruford E."/>
            <person name="Monteiro A."/>
        </authorList>
    </citation>
    <scope>NOMENCLATURE</scope>
</reference>
<reference key="5">
    <citation type="journal article" date="2009" name="Cell Stress Chaperones">
        <title>Guidelines for the nomenclature of the human heat shock proteins.</title>
        <authorList>
            <person name="Kampinga H.H."/>
            <person name="Hageman J."/>
            <person name="Vos M.J."/>
            <person name="Kubota H."/>
            <person name="Tanguay R.M."/>
            <person name="Bruford E.A."/>
            <person name="Cheetham M.E."/>
            <person name="Chen B."/>
            <person name="Hightower L.E."/>
        </authorList>
    </citation>
    <scope>NOMENCLATURE</scope>
</reference>
<reference key="6">
    <citation type="journal article" date="2008" name="Proteomics">
        <title>Large-scale phosphoproteome analysis of human liver tissue by enrichment and fractionation of phosphopeptides with strong anion exchange chromatography.</title>
        <authorList>
            <person name="Han G."/>
            <person name="Ye M."/>
            <person name="Zhou H."/>
            <person name="Jiang X."/>
            <person name="Feng S."/>
            <person name="Jiang X."/>
            <person name="Tian R."/>
            <person name="Wan D."/>
            <person name="Zou H."/>
            <person name="Gu J."/>
        </authorList>
    </citation>
    <scope>PHOSPHORYLATION [LARGE SCALE ANALYSIS] AT SER-263</scope>
    <scope>IDENTIFICATION BY MASS SPECTROMETRY [LARGE SCALE ANALYSIS]</scope>
    <source>
        <tissue>Liver</tissue>
    </source>
</reference>
<reference key="7">
    <citation type="journal article" date="2018" name="Cell Res.">
        <title>Landscape of the regulatory elements for lysine 2-hydroxyisobutyrylation pathway.</title>
        <authorList>
            <person name="Huang H."/>
            <person name="Luo Z."/>
            <person name="Qi S."/>
            <person name="Huang J."/>
            <person name="Xu P."/>
            <person name="Wang X."/>
            <person name="Gao L."/>
            <person name="Li F."/>
            <person name="Wang J."/>
            <person name="Zhao W."/>
            <person name="Gu W."/>
            <person name="Chen Z."/>
            <person name="Dai L."/>
            <person name="Dai J."/>
            <person name="Zhao Y."/>
        </authorList>
    </citation>
    <scope>HYDROXYBUTYRYLATION AT LYS-112</scope>
</reference>
<name>HS902_HUMAN</name>
<evidence type="ECO:0000250" key="1"/>
<evidence type="ECO:0000256" key="2">
    <source>
        <dbReference type="SAM" id="MobiDB-lite"/>
    </source>
</evidence>
<evidence type="ECO:0000269" key="3">
    <source>
    </source>
</evidence>
<evidence type="ECO:0000269" key="4">
    <source>
    </source>
</evidence>
<evidence type="ECO:0000303" key="5">
    <source>
    </source>
</evidence>
<evidence type="ECO:0000305" key="6"/>
<evidence type="ECO:0000312" key="7">
    <source>
        <dbReference type="HGNC" id="HGNC:5256"/>
    </source>
</evidence>
<evidence type="ECO:0007744" key="8">
    <source>
    </source>
</evidence>
<feature type="chain" id="PRO_0000324325" description="Heat shock protein HSP 90-alpha A2">
    <location>
        <begin position="1"/>
        <end position="343"/>
    </location>
</feature>
<feature type="region of interest" description="Disordered" evidence="2">
    <location>
        <begin position="227"/>
        <end position="285"/>
    </location>
</feature>
<feature type="compositionally biased region" description="Acidic residues" evidence="2">
    <location>
        <begin position="230"/>
        <end position="246"/>
    </location>
</feature>
<feature type="compositionally biased region" description="Basic and acidic residues" evidence="2">
    <location>
        <begin position="247"/>
        <end position="258"/>
    </location>
</feature>
<feature type="compositionally biased region" description="Acidic residues" evidence="2">
    <location>
        <begin position="259"/>
        <end position="268"/>
    </location>
</feature>
<feature type="binding site" evidence="1">
    <location>
        <position position="51"/>
    </location>
    <ligand>
        <name>ATP</name>
        <dbReference type="ChEBI" id="CHEBI:30616"/>
    </ligand>
</feature>
<feature type="binding site" evidence="1">
    <location>
        <position position="93"/>
    </location>
    <ligand>
        <name>ATP</name>
        <dbReference type="ChEBI" id="CHEBI:30616"/>
    </ligand>
</feature>
<feature type="binding site" evidence="1">
    <location>
        <position position="112"/>
    </location>
    <ligand>
        <name>ATP</name>
        <dbReference type="ChEBI" id="CHEBI:30616"/>
    </ligand>
</feature>
<feature type="binding site" evidence="1">
    <location>
        <position position="138"/>
    </location>
    <ligand>
        <name>ATP</name>
        <dbReference type="ChEBI" id="CHEBI:30616"/>
    </ligand>
</feature>
<feature type="modified residue" description="N6-(2-hydroxyisobutyryl)lysine" evidence="4">
    <location>
        <position position="112"/>
    </location>
</feature>
<feature type="modified residue" description="Phosphoserine" evidence="8">
    <location>
        <position position="263"/>
    </location>
</feature>
<feature type="sequence variant" id="VAR_039732" description="In dbSNP:rs1826330." evidence="3">
    <original>T</original>
    <variation>A</variation>
    <location>
        <position position="235"/>
    </location>
</feature>
<feature type="sequence variant" id="VAR_039733" description="In dbSNP:rs2726836.">
    <original>C</original>
    <variation>Y</variation>
    <location>
        <position position="312"/>
    </location>
</feature>
<feature type="sequence conflict" description="In Ref. 2; AAA36024." evidence="6" ref="2">
    <original>D</original>
    <variation>DK</variation>
    <location>
        <position position="273"/>
    </location>
</feature>
<feature type="sequence conflict" description="In Ref. 2; AAA36024." evidence="6" ref="2">
    <original>Y</original>
    <variation>I</variation>
    <location>
        <position position="308"/>
    </location>
</feature>